<comment type="function">
    <text evidence="1">Catalyzes the transfer of the enolpyruvyl moiety of phosphoenolpyruvate (PEP) to the 5-hydroxyl of shikimate-3-phosphate (S3P) to produce enolpyruvyl shikimate-3-phosphate and inorganic phosphate.</text>
</comment>
<comment type="catalytic activity">
    <reaction evidence="1">
        <text>3-phosphoshikimate + phosphoenolpyruvate = 5-O-(1-carboxyvinyl)-3-phosphoshikimate + phosphate</text>
        <dbReference type="Rhea" id="RHEA:21256"/>
        <dbReference type="ChEBI" id="CHEBI:43474"/>
        <dbReference type="ChEBI" id="CHEBI:57701"/>
        <dbReference type="ChEBI" id="CHEBI:58702"/>
        <dbReference type="ChEBI" id="CHEBI:145989"/>
        <dbReference type="EC" id="2.5.1.19"/>
    </reaction>
    <physiologicalReaction direction="left-to-right" evidence="1">
        <dbReference type="Rhea" id="RHEA:21257"/>
    </physiologicalReaction>
</comment>
<comment type="pathway">
    <text evidence="1">Metabolic intermediate biosynthesis; chorismate biosynthesis; chorismate from D-erythrose 4-phosphate and phosphoenolpyruvate: step 6/7.</text>
</comment>
<comment type="subunit">
    <text evidence="1">Monomer.</text>
</comment>
<comment type="subcellular location">
    <subcellularLocation>
        <location evidence="1">Cytoplasm</location>
    </subcellularLocation>
</comment>
<comment type="similarity">
    <text evidence="1">Belongs to the EPSP synthase family.</text>
</comment>
<feature type="chain" id="PRO_0000088257" description="3-phosphoshikimate 1-carboxyvinyltransferase">
    <location>
        <begin position="1"/>
        <end position="435"/>
    </location>
</feature>
<feature type="active site" description="Proton acceptor" evidence="1">
    <location>
        <position position="319"/>
    </location>
</feature>
<feature type="binding site" evidence="1">
    <location>
        <position position="25"/>
    </location>
    <ligand>
        <name>3-phosphoshikimate</name>
        <dbReference type="ChEBI" id="CHEBI:145989"/>
    </ligand>
</feature>
<feature type="binding site" evidence="1">
    <location>
        <position position="25"/>
    </location>
    <ligand>
        <name>phosphoenolpyruvate</name>
        <dbReference type="ChEBI" id="CHEBI:58702"/>
    </ligand>
</feature>
<feature type="binding site" evidence="1">
    <location>
        <position position="26"/>
    </location>
    <ligand>
        <name>3-phosphoshikimate</name>
        <dbReference type="ChEBI" id="CHEBI:145989"/>
    </ligand>
</feature>
<feature type="binding site" evidence="1">
    <location>
        <position position="30"/>
    </location>
    <ligand>
        <name>3-phosphoshikimate</name>
        <dbReference type="ChEBI" id="CHEBI:145989"/>
    </ligand>
</feature>
<feature type="binding site" evidence="1">
    <location>
        <position position="99"/>
    </location>
    <ligand>
        <name>phosphoenolpyruvate</name>
        <dbReference type="ChEBI" id="CHEBI:58702"/>
    </ligand>
</feature>
<feature type="binding site" evidence="1">
    <location>
        <position position="130"/>
    </location>
    <ligand>
        <name>phosphoenolpyruvate</name>
        <dbReference type="ChEBI" id="CHEBI:58702"/>
    </ligand>
</feature>
<feature type="binding site" evidence="1">
    <location>
        <position position="176"/>
    </location>
    <ligand>
        <name>3-phosphoshikimate</name>
        <dbReference type="ChEBI" id="CHEBI:145989"/>
    </ligand>
</feature>
<feature type="binding site" evidence="1">
    <location>
        <position position="177"/>
    </location>
    <ligand>
        <name>3-phosphoshikimate</name>
        <dbReference type="ChEBI" id="CHEBI:145989"/>
    </ligand>
</feature>
<feature type="binding site" evidence="1">
    <location>
        <position position="178"/>
    </location>
    <ligand>
        <name>3-phosphoshikimate</name>
        <dbReference type="ChEBI" id="CHEBI:145989"/>
    </ligand>
</feature>
<feature type="binding site" evidence="1">
    <location>
        <position position="178"/>
    </location>
    <ligand>
        <name>phosphoenolpyruvate</name>
        <dbReference type="ChEBI" id="CHEBI:58702"/>
    </ligand>
</feature>
<feature type="binding site" evidence="1">
    <location>
        <position position="204"/>
    </location>
    <ligand>
        <name>3-phosphoshikimate</name>
        <dbReference type="ChEBI" id="CHEBI:145989"/>
    </ligand>
</feature>
<feature type="binding site" evidence="1">
    <location>
        <position position="319"/>
    </location>
    <ligand>
        <name>3-phosphoshikimate</name>
        <dbReference type="ChEBI" id="CHEBI:145989"/>
    </ligand>
</feature>
<feature type="binding site" evidence="1">
    <location>
        <position position="342"/>
    </location>
    <ligand>
        <name>3-phosphoshikimate</name>
        <dbReference type="ChEBI" id="CHEBI:145989"/>
    </ligand>
</feature>
<feature type="binding site" evidence="1">
    <location>
        <position position="346"/>
    </location>
    <ligand>
        <name>3-phosphoshikimate</name>
        <dbReference type="ChEBI" id="CHEBI:145989"/>
    </ligand>
</feature>
<feature type="binding site" evidence="1">
    <location>
        <position position="350"/>
    </location>
    <ligand>
        <name>phosphoenolpyruvate</name>
        <dbReference type="ChEBI" id="CHEBI:58702"/>
    </ligand>
</feature>
<feature type="binding site" evidence="1">
    <location>
        <position position="394"/>
    </location>
    <ligand>
        <name>phosphoenolpyruvate</name>
        <dbReference type="ChEBI" id="CHEBI:58702"/>
    </ligand>
</feature>
<feature type="binding site" evidence="1">
    <location>
        <position position="419"/>
    </location>
    <ligand>
        <name>phosphoenolpyruvate</name>
        <dbReference type="ChEBI" id="CHEBI:58702"/>
    </ligand>
</feature>
<reference key="1">
    <citation type="submission" date="2003-06" db="EMBL/GenBank/DDBJ databases">
        <title>The complete genome sequence of Haemophilus ducreyi.</title>
        <authorList>
            <person name="Munson R.S. Jr."/>
            <person name="Ray W.C."/>
            <person name="Mahairas G."/>
            <person name="Sabo P."/>
            <person name="Mungur R."/>
            <person name="Johnson L."/>
            <person name="Nguyen D."/>
            <person name="Wang J."/>
            <person name="Forst C."/>
            <person name="Hood L."/>
        </authorList>
    </citation>
    <scope>NUCLEOTIDE SEQUENCE [LARGE SCALE GENOMIC DNA]</scope>
    <source>
        <strain>35000HP / ATCC 700724</strain>
    </source>
</reference>
<proteinExistence type="inferred from homology"/>
<accession>Q7VLN9</accession>
<evidence type="ECO:0000255" key="1">
    <source>
        <dbReference type="HAMAP-Rule" id="MF_00210"/>
    </source>
</evidence>
<gene>
    <name evidence="1" type="primary">aroA</name>
    <name type="ordered locus">HD_1383</name>
</gene>
<sequence length="435" mass="47868">MNTIEKIRLDPITRIEGEITLPGSKSLSNRALLLAALAKGTTRVTNLLVSDDVEHMLNALQTLGIRYTLSQDKRECIVEGACGALAWQNGLSLFLGNAGTVMRPLAAVLCLKGEVRAEVVLTGEARMQQRPIQHLVDALRQAGANIEYLENQGYPPLAIKNTGLIGGKIQIDGSISSQFLTALLMVAPLAESDMQIEIVGDLVSKPYIDMTLAMMRDFGVVVQNNNYQSFFVQAQQCYLSPGQYWVEGDASSASYFLAAAAIKGKVKVNGIGKNSIQGDRLFADVLAKMGANISWGEDFIQAEKSVLRGIDVDLNHIPDAAITIAIVALFAETETIIRNVYNWRVKETDRLSAMATELRKLGATVEEGQDFIRIQPLALTDFETAEIETYNDHRIAMCFSLIALSNTAVTILDPQCTRKTFPNYFAEFEKLWRKN</sequence>
<keyword id="KW-0028">Amino-acid biosynthesis</keyword>
<keyword id="KW-0057">Aromatic amino acid biosynthesis</keyword>
<keyword id="KW-0963">Cytoplasm</keyword>
<keyword id="KW-1185">Reference proteome</keyword>
<keyword id="KW-0808">Transferase</keyword>
<name>AROA_HAEDU</name>
<dbReference type="EC" id="2.5.1.19" evidence="1"/>
<dbReference type="EMBL" id="AE017143">
    <property type="protein sequence ID" value="AAP96196.1"/>
    <property type="molecule type" value="Genomic_DNA"/>
</dbReference>
<dbReference type="SMR" id="Q7VLN9"/>
<dbReference type="STRING" id="233412.HD_1383"/>
<dbReference type="KEGG" id="hdu:HD_1383"/>
<dbReference type="eggNOG" id="COG0128">
    <property type="taxonomic scope" value="Bacteria"/>
</dbReference>
<dbReference type="HOGENOM" id="CLU_024321_0_0_6"/>
<dbReference type="UniPathway" id="UPA00053">
    <property type="reaction ID" value="UER00089"/>
</dbReference>
<dbReference type="Proteomes" id="UP000001022">
    <property type="component" value="Chromosome"/>
</dbReference>
<dbReference type="GO" id="GO:0005737">
    <property type="term" value="C:cytoplasm"/>
    <property type="evidence" value="ECO:0007669"/>
    <property type="project" value="UniProtKB-SubCell"/>
</dbReference>
<dbReference type="GO" id="GO:0003866">
    <property type="term" value="F:3-phosphoshikimate 1-carboxyvinyltransferase activity"/>
    <property type="evidence" value="ECO:0007669"/>
    <property type="project" value="UniProtKB-UniRule"/>
</dbReference>
<dbReference type="GO" id="GO:0008652">
    <property type="term" value="P:amino acid biosynthetic process"/>
    <property type="evidence" value="ECO:0007669"/>
    <property type="project" value="UniProtKB-KW"/>
</dbReference>
<dbReference type="GO" id="GO:0009073">
    <property type="term" value="P:aromatic amino acid family biosynthetic process"/>
    <property type="evidence" value="ECO:0007669"/>
    <property type="project" value="UniProtKB-KW"/>
</dbReference>
<dbReference type="GO" id="GO:0009423">
    <property type="term" value="P:chorismate biosynthetic process"/>
    <property type="evidence" value="ECO:0007669"/>
    <property type="project" value="UniProtKB-UniRule"/>
</dbReference>
<dbReference type="CDD" id="cd01556">
    <property type="entry name" value="EPSP_synthase"/>
    <property type="match status" value="1"/>
</dbReference>
<dbReference type="FunFam" id="3.65.10.10:FF:000003">
    <property type="entry name" value="3-phosphoshikimate 1-carboxyvinyltransferase"/>
    <property type="match status" value="1"/>
</dbReference>
<dbReference type="FunFam" id="3.65.10.10:FF:000004">
    <property type="entry name" value="3-phosphoshikimate 1-carboxyvinyltransferase"/>
    <property type="match status" value="1"/>
</dbReference>
<dbReference type="Gene3D" id="3.65.10.10">
    <property type="entry name" value="Enolpyruvate transferase domain"/>
    <property type="match status" value="2"/>
</dbReference>
<dbReference type="HAMAP" id="MF_00210">
    <property type="entry name" value="EPSP_synth"/>
    <property type="match status" value="1"/>
</dbReference>
<dbReference type="InterPro" id="IPR001986">
    <property type="entry name" value="Enolpyruvate_Tfrase_dom"/>
</dbReference>
<dbReference type="InterPro" id="IPR036968">
    <property type="entry name" value="Enolpyruvate_Tfrase_sf"/>
</dbReference>
<dbReference type="InterPro" id="IPR006264">
    <property type="entry name" value="EPSP_synthase"/>
</dbReference>
<dbReference type="InterPro" id="IPR023193">
    <property type="entry name" value="EPSP_synthase_CS"/>
</dbReference>
<dbReference type="InterPro" id="IPR013792">
    <property type="entry name" value="RNA3'P_cycl/enolpyr_Trfase_a/b"/>
</dbReference>
<dbReference type="NCBIfam" id="TIGR01356">
    <property type="entry name" value="aroA"/>
    <property type="match status" value="1"/>
</dbReference>
<dbReference type="PANTHER" id="PTHR21090">
    <property type="entry name" value="AROM/DEHYDROQUINATE SYNTHASE"/>
    <property type="match status" value="1"/>
</dbReference>
<dbReference type="PANTHER" id="PTHR21090:SF5">
    <property type="entry name" value="PENTAFUNCTIONAL AROM POLYPEPTIDE"/>
    <property type="match status" value="1"/>
</dbReference>
<dbReference type="Pfam" id="PF00275">
    <property type="entry name" value="EPSP_synthase"/>
    <property type="match status" value="1"/>
</dbReference>
<dbReference type="PIRSF" id="PIRSF000505">
    <property type="entry name" value="EPSPS"/>
    <property type="match status" value="1"/>
</dbReference>
<dbReference type="SUPFAM" id="SSF55205">
    <property type="entry name" value="EPT/RTPC-like"/>
    <property type="match status" value="1"/>
</dbReference>
<dbReference type="PROSITE" id="PS00104">
    <property type="entry name" value="EPSP_SYNTHASE_1"/>
    <property type="match status" value="1"/>
</dbReference>
<dbReference type="PROSITE" id="PS00885">
    <property type="entry name" value="EPSP_SYNTHASE_2"/>
    <property type="match status" value="1"/>
</dbReference>
<protein>
    <recommendedName>
        <fullName evidence="1">3-phosphoshikimate 1-carboxyvinyltransferase</fullName>
        <ecNumber evidence="1">2.5.1.19</ecNumber>
    </recommendedName>
    <alternativeName>
        <fullName evidence="1">5-enolpyruvylshikimate-3-phosphate synthase</fullName>
        <shortName evidence="1">EPSP synthase</shortName>
        <shortName evidence="1">EPSPS</shortName>
    </alternativeName>
</protein>
<organism>
    <name type="scientific">Haemophilus ducreyi (strain 35000HP / ATCC 700724)</name>
    <dbReference type="NCBI Taxonomy" id="233412"/>
    <lineage>
        <taxon>Bacteria</taxon>
        <taxon>Pseudomonadati</taxon>
        <taxon>Pseudomonadota</taxon>
        <taxon>Gammaproteobacteria</taxon>
        <taxon>Pasteurellales</taxon>
        <taxon>Pasteurellaceae</taxon>
        <taxon>Haemophilus</taxon>
    </lineage>
</organism>